<gene>
    <name evidence="1" type="primary">rimM</name>
    <name type="ordered locus">CLL_A1248</name>
</gene>
<keyword id="KW-0143">Chaperone</keyword>
<keyword id="KW-0963">Cytoplasm</keyword>
<keyword id="KW-0690">Ribosome biogenesis</keyword>
<keyword id="KW-0698">rRNA processing</keyword>
<accession>B2TJ30</accession>
<feature type="chain" id="PRO_1000089493" description="Ribosome maturation factor RimM">
    <location>
        <begin position="1"/>
        <end position="165"/>
    </location>
</feature>
<feature type="domain" description="PRC barrel" evidence="1">
    <location>
        <begin position="89"/>
        <end position="161"/>
    </location>
</feature>
<dbReference type="EMBL" id="CP001056">
    <property type="protein sequence ID" value="ACD22826.1"/>
    <property type="molecule type" value="Genomic_DNA"/>
</dbReference>
<dbReference type="SMR" id="B2TJ30"/>
<dbReference type="KEGG" id="cbk:CLL_A1248"/>
<dbReference type="PATRIC" id="fig|935198.13.peg.1194"/>
<dbReference type="HOGENOM" id="CLU_077636_3_2_9"/>
<dbReference type="Proteomes" id="UP000001195">
    <property type="component" value="Chromosome"/>
</dbReference>
<dbReference type="GO" id="GO:0005737">
    <property type="term" value="C:cytoplasm"/>
    <property type="evidence" value="ECO:0007669"/>
    <property type="project" value="UniProtKB-SubCell"/>
</dbReference>
<dbReference type="GO" id="GO:0005840">
    <property type="term" value="C:ribosome"/>
    <property type="evidence" value="ECO:0007669"/>
    <property type="project" value="InterPro"/>
</dbReference>
<dbReference type="GO" id="GO:0043022">
    <property type="term" value="F:ribosome binding"/>
    <property type="evidence" value="ECO:0007669"/>
    <property type="project" value="InterPro"/>
</dbReference>
<dbReference type="GO" id="GO:0042274">
    <property type="term" value="P:ribosomal small subunit biogenesis"/>
    <property type="evidence" value="ECO:0007669"/>
    <property type="project" value="UniProtKB-UniRule"/>
</dbReference>
<dbReference type="GO" id="GO:0006364">
    <property type="term" value="P:rRNA processing"/>
    <property type="evidence" value="ECO:0007669"/>
    <property type="project" value="UniProtKB-UniRule"/>
</dbReference>
<dbReference type="Gene3D" id="2.30.30.240">
    <property type="entry name" value="PRC-barrel domain"/>
    <property type="match status" value="1"/>
</dbReference>
<dbReference type="Gene3D" id="2.40.30.60">
    <property type="entry name" value="RimM"/>
    <property type="match status" value="1"/>
</dbReference>
<dbReference type="HAMAP" id="MF_00014">
    <property type="entry name" value="Ribosome_mat_RimM"/>
    <property type="match status" value="1"/>
</dbReference>
<dbReference type="InterPro" id="IPR027275">
    <property type="entry name" value="PRC-brl_dom"/>
</dbReference>
<dbReference type="InterPro" id="IPR011033">
    <property type="entry name" value="PRC_barrel-like_sf"/>
</dbReference>
<dbReference type="InterPro" id="IPR011961">
    <property type="entry name" value="RimM"/>
</dbReference>
<dbReference type="InterPro" id="IPR002676">
    <property type="entry name" value="RimM_N"/>
</dbReference>
<dbReference type="InterPro" id="IPR036976">
    <property type="entry name" value="RimM_N_sf"/>
</dbReference>
<dbReference type="InterPro" id="IPR009000">
    <property type="entry name" value="Transl_B-barrel_sf"/>
</dbReference>
<dbReference type="NCBIfam" id="TIGR02273">
    <property type="entry name" value="16S_RimM"/>
    <property type="match status" value="1"/>
</dbReference>
<dbReference type="PANTHER" id="PTHR33692">
    <property type="entry name" value="RIBOSOME MATURATION FACTOR RIMM"/>
    <property type="match status" value="1"/>
</dbReference>
<dbReference type="PANTHER" id="PTHR33692:SF1">
    <property type="entry name" value="RIBOSOME MATURATION FACTOR RIMM"/>
    <property type="match status" value="1"/>
</dbReference>
<dbReference type="Pfam" id="PF05239">
    <property type="entry name" value="PRC"/>
    <property type="match status" value="1"/>
</dbReference>
<dbReference type="Pfam" id="PF01782">
    <property type="entry name" value="RimM"/>
    <property type="match status" value="1"/>
</dbReference>
<dbReference type="SUPFAM" id="SSF50346">
    <property type="entry name" value="PRC-barrel domain"/>
    <property type="match status" value="1"/>
</dbReference>
<dbReference type="SUPFAM" id="SSF50447">
    <property type="entry name" value="Translation proteins"/>
    <property type="match status" value="1"/>
</dbReference>
<proteinExistence type="inferred from homology"/>
<protein>
    <recommendedName>
        <fullName evidence="1">Ribosome maturation factor RimM</fullName>
    </recommendedName>
</protein>
<evidence type="ECO:0000255" key="1">
    <source>
        <dbReference type="HAMAP-Rule" id="MF_00014"/>
    </source>
</evidence>
<sequence length="165" mass="19137">MEEIFKVGQIVNTHGIKGEVKVYPLTEDVNKFKKLKNVLIDGKERNIQSVKFQKDRVILKIEGIDTMNDAETYKQKYIEIFRSNAPKLEADTHYVVDLVGCMVYDSDNVELGKIFDVISTPSNDVYWIKEPKQLLIPVLKDIVLDINIDNKKIVIKPVRQWQDED</sequence>
<name>RIMM_CLOBB</name>
<reference key="1">
    <citation type="submission" date="2008-04" db="EMBL/GenBank/DDBJ databases">
        <title>Complete sequence of Clostridium botulinum strain Eklund.</title>
        <authorList>
            <person name="Brinkac L.M."/>
            <person name="Brown J.L."/>
            <person name="Bruce D."/>
            <person name="Detter C."/>
            <person name="Munk C."/>
            <person name="Smith L.A."/>
            <person name="Smith T.J."/>
            <person name="Sutton G."/>
            <person name="Brettin T.S."/>
        </authorList>
    </citation>
    <scope>NUCLEOTIDE SEQUENCE [LARGE SCALE GENOMIC DNA]</scope>
    <source>
        <strain>Eklund 17B / Type B</strain>
    </source>
</reference>
<organism>
    <name type="scientific">Clostridium botulinum (strain Eklund 17B / Type B)</name>
    <dbReference type="NCBI Taxonomy" id="935198"/>
    <lineage>
        <taxon>Bacteria</taxon>
        <taxon>Bacillati</taxon>
        <taxon>Bacillota</taxon>
        <taxon>Clostridia</taxon>
        <taxon>Eubacteriales</taxon>
        <taxon>Clostridiaceae</taxon>
        <taxon>Clostridium</taxon>
    </lineage>
</organism>
<comment type="function">
    <text evidence="1">An accessory protein needed during the final step in the assembly of 30S ribosomal subunit, possibly for assembly of the head region. Essential for efficient processing of 16S rRNA. May be needed both before and after RbfA during the maturation of 16S rRNA. It has affinity for free ribosomal 30S subunits but not for 70S ribosomes.</text>
</comment>
<comment type="subunit">
    <text evidence="1">Binds ribosomal protein uS19.</text>
</comment>
<comment type="subcellular location">
    <subcellularLocation>
        <location evidence="1">Cytoplasm</location>
    </subcellularLocation>
</comment>
<comment type="domain">
    <text evidence="1">The PRC barrel domain binds ribosomal protein uS19.</text>
</comment>
<comment type="similarity">
    <text evidence="1">Belongs to the RimM family.</text>
</comment>